<comment type="function">
    <text evidence="1">Essential cell division protein.</text>
</comment>
<comment type="subcellular location">
    <subcellularLocation>
        <location evidence="1">Cell inner membrane</location>
        <topology evidence="1">Single-pass type II membrane protein</topology>
    </subcellularLocation>
    <text evidence="1">Localizes to the division septum.</text>
</comment>
<comment type="similarity">
    <text evidence="1">Belongs to the FtsQ/DivIB family. FtsQ subfamily.</text>
</comment>
<feature type="chain" id="PRO_0000414669" description="Cell division protein FtsQ">
    <location>
        <begin position="1"/>
        <end position="274"/>
    </location>
</feature>
<feature type="topological domain" description="Cytoplasmic" evidence="1">
    <location>
        <begin position="1"/>
        <end position="33"/>
    </location>
</feature>
<feature type="transmembrane region" description="Helical" evidence="1">
    <location>
        <begin position="34"/>
        <end position="56"/>
    </location>
</feature>
<feature type="topological domain" description="Periplasmic" evidence="1">
    <location>
        <begin position="57"/>
        <end position="274"/>
    </location>
</feature>
<feature type="domain" description="POTRA" evidence="2">
    <location>
        <begin position="65"/>
        <end position="133"/>
    </location>
</feature>
<feature type="region of interest" description="Disordered" evidence="3">
    <location>
        <begin position="1"/>
        <end position="24"/>
    </location>
</feature>
<feature type="compositionally biased region" description="Basic residues" evidence="3">
    <location>
        <begin position="7"/>
        <end position="21"/>
    </location>
</feature>
<organism>
    <name type="scientific">Geobacter sp. (strain M21)</name>
    <dbReference type="NCBI Taxonomy" id="443144"/>
    <lineage>
        <taxon>Bacteria</taxon>
        <taxon>Pseudomonadati</taxon>
        <taxon>Thermodesulfobacteriota</taxon>
        <taxon>Desulfuromonadia</taxon>
        <taxon>Geobacterales</taxon>
        <taxon>Geobacteraceae</taxon>
        <taxon>Geobacter</taxon>
    </lineage>
</organism>
<protein>
    <recommendedName>
        <fullName evidence="1">Cell division protein FtsQ</fullName>
    </recommendedName>
</protein>
<evidence type="ECO:0000255" key="1">
    <source>
        <dbReference type="HAMAP-Rule" id="MF_00911"/>
    </source>
</evidence>
<evidence type="ECO:0000255" key="2">
    <source>
        <dbReference type="PROSITE-ProRule" id="PRU01115"/>
    </source>
</evidence>
<evidence type="ECO:0000256" key="3">
    <source>
        <dbReference type="SAM" id="MobiDB-lite"/>
    </source>
</evidence>
<keyword id="KW-0131">Cell cycle</keyword>
<keyword id="KW-0132">Cell division</keyword>
<keyword id="KW-0997">Cell inner membrane</keyword>
<keyword id="KW-1003">Cell membrane</keyword>
<keyword id="KW-0472">Membrane</keyword>
<keyword id="KW-0812">Transmembrane</keyword>
<keyword id="KW-1133">Transmembrane helix</keyword>
<name>FTSQ_GEOSM</name>
<sequence>MRDLHAKKQRVPHNRVKKPPKERKPINWGPILKFASRGFGGAALCAGLGFGGWQLYNLVSRTTLLRLEAIEVSPLKRVSREEIITLAGVRPGDSMLKVDLKTVVARLSKNPWLEEVQVRRYFPHTLSITVSERAPQAVANVGCLYYLDDKGVLFKSLVEGDRLDYPLITGFTEEELAQDPKGCQEALKNALALIDTLKNGGVFSLEDISEIHYSKGYGFTLFTMQGGVPVKLGNGGFGEKLTRLAGIYKELQPQMQALDYIDLDYADKIIVKKV</sequence>
<dbReference type="EMBL" id="CP001661">
    <property type="protein sequence ID" value="ACT16592.1"/>
    <property type="molecule type" value="Genomic_DNA"/>
</dbReference>
<dbReference type="SMR" id="C6DZL0"/>
<dbReference type="STRING" id="443144.GM21_0512"/>
<dbReference type="KEGG" id="gem:GM21_0512"/>
<dbReference type="eggNOG" id="COG1589">
    <property type="taxonomic scope" value="Bacteria"/>
</dbReference>
<dbReference type="HOGENOM" id="CLU_047677_3_0_7"/>
<dbReference type="OrthoDB" id="5510599at2"/>
<dbReference type="GO" id="GO:0032153">
    <property type="term" value="C:cell division site"/>
    <property type="evidence" value="ECO:0007669"/>
    <property type="project" value="UniProtKB-UniRule"/>
</dbReference>
<dbReference type="GO" id="GO:0005886">
    <property type="term" value="C:plasma membrane"/>
    <property type="evidence" value="ECO:0007669"/>
    <property type="project" value="UniProtKB-SubCell"/>
</dbReference>
<dbReference type="GO" id="GO:0090529">
    <property type="term" value="P:cell septum assembly"/>
    <property type="evidence" value="ECO:0007669"/>
    <property type="project" value="InterPro"/>
</dbReference>
<dbReference type="GO" id="GO:0043093">
    <property type="term" value="P:FtsZ-dependent cytokinesis"/>
    <property type="evidence" value="ECO:0007669"/>
    <property type="project" value="UniProtKB-UniRule"/>
</dbReference>
<dbReference type="Gene3D" id="3.40.50.11690">
    <property type="entry name" value="Cell division protein FtsQ/DivIB"/>
    <property type="match status" value="1"/>
</dbReference>
<dbReference type="Gene3D" id="3.10.20.310">
    <property type="entry name" value="membrane protein fhac"/>
    <property type="match status" value="1"/>
</dbReference>
<dbReference type="HAMAP" id="MF_00911">
    <property type="entry name" value="FtsQ_subfam"/>
    <property type="match status" value="1"/>
</dbReference>
<dbReference type="InterPro" id="IPR005548">
    <property type="entry name" value="Cell_div_FtsQ/DivIB_C"/>
</dbReference>
<dbReference type="InterPro" id="IPR026579">
    <property type="entry name" value="FtsQ"/>
</dbReference>
<dbReference type="InterPro" id="IPR045335">
    <property type="entry name" value="FtsQ_C_sf"/>
</dbReference>
<dbReference type="InterPro" id="IPR034746">
    <property type="entry name" value="POTRA"/>
</dbReference>
<dbReference type="InterPro" id="IPR013685">
    <property type="entry name" value="POTRA_FtsQ_type"/>
</dbReference>
<dbReference type="PANTHER" id="PTHR35851">
    <property type="entry name" value="CELL DIVISION PROTEIN FTSQ"/>
    <property type="match status" value="1"/>
</dbReference>
<dbReference type="PANTHER" id="PTHR35851:SF1">
    <property type="entry name" value="CELL DIVISION PROTEIN FTSQ"/>
    <property type="match status" value="1"/>
</dbReference>
<dbReference type="Pfam" id="PF03799">
    <property type="entry name" value="FtsQ_DivIB_C"/>
    <property type="match status" value="1"/>
</dbReference>
<dbReference type="Pfam" id="PF08478">
    <property type="entry name" value="POTRA_1"/>
    <property type="match status" value="1"/>
</dbReference>
<dbReference type="PROSITE" id="PS51779">
    <property type="entry name" value="POTRA"/>
    <property type="match status" value="1"/>
</dbReference>
<proteinExistence type="inferred from homology"/>
<reference key="1">
    <citation type="submission" date="2009-07" db="EMBL/GenBank/DDBJ databases">
        <title>Complete sequence of Geobacter sp. M21.</title>
        <authorList>
            <consortium name="US DOE Joint Genome Institute"/>
            <person name="Lucas S."/>
            <person name="Copeland A."/>
            <person name="Lapidus A."/>
            <person name="Glavina del Rio T."/>
            <person name="Dalin E."/>
            <person name="Tice H."/>
            <person name="Bruce D."/>
            <person name="Goodwin L."/>
            <person name="Pitluck S."/>
            <person name="Saunders E."/>
            <person name="Brettin T."/>
            <person name="Detter J.C."/>
            <person name="Han C."/>
            <person name="Larimer F."/>
            <person name="Land M."/>
            <person name="Hauser L."/>
            <person name="Kyrpides N."/>
            <person name="Ovchinnikova G."/>
            <person name="Lovley D."/>
        </authorList>
    </citation>
    <scope>NUCLEOTIDE SEQUENCE [LARGE SCALE GENOMIC DNA]</scope>
    <source>
        <strain>M21</strain>
    </source>
</reference>
<accession>C6DZL0</accession>
<gene>
    <name evidence="1" type="primary">ftsQ</name>
    <name type="ordered locus">GM21_0512</name>
</gene>